<organism>
    <name type="scientific">Mesorhizobium japonicum (strain LMG 29417 / CECT 9101 / MAFF 303099)</name>
    <name type="common">Mesorhizobium loti (strain MAFF 303099)</name>
    <dbReference type="NCBI Taxonomy" id="266835"/>
    <lineage>
        <taxon>Bacteria</taxon>
        <taxon>Pseudomonadati</taxon>
        <taxon>Pseudomonadota</taxon>
        <taxon>Alphaproteobacteria</taxon>
        <taxon>Hyphomicrobiales</taxon>
        <taxon>Phyllobacteriaceae</taxon>
        <taxon>Mesorhizobium</taxon>
    </lineage>
</organism>
<protein>
    <recommendedName>
        <fullName evidence="6">4-pyridoxolactonase</fullName>
        <ecNumber>3.1.1.27</ecNumber>
    </recommendedName>
</protein>
<name>PDLA_RHILO</name>
<sequence length="268" mass="29856">MSDTKVYLLDGGSLVLDGYHVFWNRGPGGEVRFPVYSILIEHAEGRFLIDTGYDYDHVMKVLPFEKPIQEKHQTIPGALGLLGLEPRDIDVVVNSHFHFDHCGGNKYFPHAKKICHRSEVPQACNPQPFEHLGYSDLSFSAEAAEARGATAQLLEGTTRANSTFEGIDGDVDLARGVKLISTPGHSIGHYSLLVEFPRRKPILFTIDAAYTQKSLETLCQAAFHIDPVAGVNSMRKVKKLAEDHGAELMYSHDMDNFKTYRTGTQFYG</sequence>
<gene>
    <name type="ordered locus">mlr6805</name>
</gene>
<dbReference type="EC" id="3.1.1.27"/>
<dbReference type="EMBL" id="AB197037">
    <property type="protein sequence ID" value="BAE53392.1"/>
    <property type="molecule type" value="Genomic_DNA"/>
</dbReference>
<dbReference type="EMBL" id="BA000012">
    <property type="protein sequence ID" value="BAB53031.1"/>
    <property type="molecule type" value="Genomic_DNA"/>
</dbReference>
<dbReference type="PDB" id="3AJ3">
    <property type="method" value="X-ray"/>
    <property type="resolution" value="1.58 A"/>
    <property type="chains" value="A=1-268"/>
</dbReference>
<dbReference type="PDB" id="4KEP">
    <property type="method" value="X-ray"/>
    <property type="resolution" value="1.83 A"/>
    <property type="chains" value="A=1-268"/>
</dbReference>
<dbReference type="PDB" id="4KEQ">
    <property type="method" value="X-ray"/>
    <property type="resolution" value="2.28 A"/>
    <property type="chains" value="A=1-268"/>
</dbReference>
<dbReference type="PDBsum" id="3AJ3"/>
<dbReference type="PDBsum" id="4KEP"/>
<dbReference type="PDBsum" id="4KEQ"/>
<dbReference type="SMR" id="Q988B9"/>
<dbReference type="KEGG" id="mlo:mlr6805"/>
<dbReference type="eggNOG" id="COG0491">
    <property type="taxonomic scope" value="Bacteria"/>
</dbReference>
<dbReference type="HOGENOM" id="CLU_030571_3_2_5"/>
<dbReference type="BioCyc" id="MetaCyc:MONOMER-13149"/>
<dbReference type="BRENDA" id="3.1.1.27">
    <property type="organism ID" value="3243"/>
</dbReference>
<dbReference type="UniPathway" id="UPA00192">
    <property type="reaction ID" value="UER00589"/>
</dbReference>
<dbReference type="EvolutionaryTrace" id="Q988B9"/>
<dbReference type="Proteomes" id="UP000000552">
    <property type="component" value="Chromosome"/>
</dbReference>
<dbReference type="GO" id="GO:0047585">
    <property type="term" value="F:4-pyridoxolactonase activity"/>
    <property type="evidence" value="ECO:0000314"/>
    <property type="project" value="UniProtKB"/>
</dbReference>
<dbReference type="GO" id="GO:0046872">
    <property type="term" value="F:metal ion binding"/>
    <property type="evidence" value="ECO:0007669"/>
    <property type="project" value="UniProtKB-KW"/>
</dbReference>
<dbReference type="GO" id="GO:0042820">
    <property type="term" value="P:vitamin B6 catabolic process"/>
    <property type="evidence" value="ECO:0000314"/>
    <property type="project" value="UniProtKB"/>
</dbReference>
<dbReference type="CDD" id="cd07729">
    <property type="entry name" value="AHL_lactonase_MBL-fold"/>
    <property type="match status" value="1"/>
</dbReference>
<dbReference type="FunFam" id="3.60.15.10:FF:000034">
    <property type="entry name" value="N-acyl homoserine lactonase family protein"/>
    <property type="match status" value="1"/>
</dbReference>
<dbReference type="Gene3D" id="3.60.15.10">
    <property type="entry name" value="Ribonuclease Z/Hydroxyacylglutathione hydrolase-like"/>
    <property type="match status" value="1"/>
</dbReference>
<dbReference type="InterPro" id="IPR051013">
    <property type="entry name" value="MBL_superfamily_lactonases"/>
</dbReference>
<dbReference type="InterPro" id="IPR001279">
    <property type="entry name" value="Metallo-B-lactamas"/>
</dbReference>
<dbReference type="InterPro" id="IPR036866">
    <property type="entry name" value="RibonucZ/Hydroxyglut_hydro"/>
</dbReference>
<dbReference type="PANTHER" id="PTHR42978:SF2">
    <property type="entry name" value="102 KBASES UNSTABLE REGION: FROM 1 TO 119443"/>
    <property type="match status" value="1"/>
</dbReference>
<dbReference type="PANTHER" id="PTHR42978">
    <property type="entry name" value="QUORUM-QUENCHING LACTONASE YTNP-RELATED-RELATED"/>
    <property type="match status" value="1"/>
</dbReference>
<dbReference type="Pfam" id="PF00753">
    <property type="entry name" value="Lactamase_B"/>
    <property type="match status" value="1"/>
</dbReference>
<dbReference type="SMART" id="SM00849">
    <property type="entry name" value="Lactamase_B"/>
    <property type="match status" value="1"/>
</dbReference>
<dbReference type="SUPFAM" id="SSF56281">
    <property type="entry name" value="Metallo-hydrolase/oxidoreductase"/>
    <property type="match status" value="1"/>
</dbReference>
<reference evidence="4 6" key="1">
    <citation type="journal article" date="2005" name="Biochim. Biophys. Acta">
        <title>4-Pyridoxolactonase from a symbiotic nitrogen-fixing bacterium Mesorhizobium loti: cloning, expression, and characterization.</title>
        <authorList>
            <person name="Funami J."/>
            <person name="Yoshikane Y."/>
            <person name="Kobayashi H."/>
            <person name="Yokochi N."/>
            <person name="Yuan B."/>
            <person name="Iwasaki K."/>
            <person name="Ohnishi K."/>
            <person name="Yagi T."/>
        </authorList>
    </citation>
    <scope>NUCLEOTIDE SEQUENCE [GENOMIC DNA]</scope>
    <scope>PROTEIN SEQUENCE OF 2-10</scope>
    <scope>IDENTIFICATION</scope>
    <scope>FUNCTION</scope>
    <scope>CATALYTIC ACTIVITY</scope>
    <scope>ACTIVITY REGULATION</scope>
    <scope>BIOPHYSICOCHEMICAL PROPERTIES</scope>
    <scope>PATHWAY</scope>
    <scope>COFACTOR</scope>
    <scope>SUBUNIT</scope>
    <source>
        <strain evidence="2">LMG 29417 / CECT 9101 / MAFF 303099</strain>
    </source>
</reference>
<reference evidence="5" key="2">
    <citation type="journal article" date="2000" name="DNA Res.">
        <title>Complete genome structure of the nitrogen-fixing symbiotic bacterium Mesorhizobium loti.</title>
        <authorList>
            <person name="Kaneko T."/>
            <person name="Nakamura Y."/>
            <person name="Sato S."/>
            <person name="Asamizu E."/>
            <person name="Kato T."/>
            <person name="Sasamoto S."/>
            <person name="Watanabe A."/>
            <person name="Idesawa K."/>
            <person name="Ishikawa A."/>
            <person name="Kawashima K."/>
            <person name="Kimura T."/>
            <person name="Kishida Y."/>
            <person name="Kiyokawa C."/>
            <person name="Kohara M."/>
            <person name="Matsumoto M."/>
            <person name="Matsuno A."/>
            <person name="Mochizuki Y."/>
            <person name="Nakayama S."/>
            <person name="Nakazaki N."/>
            <person name="Shimpo S."/>
            <person name="Sugimoto M."/>
            <person name="Takeuchi C."/>
            <person name="Yamada M."/>
            <person name="Tabata S."/>
        </authorList>
    </citation>
    <scope>NUCLEOTIDE SEQUENCE [LARGE SCALE GENOMIC DNA]</scope>
    <source>
        <strain>LMG 29417 / CECT 9101 / MAFF 303099</strain>
    </source>
</reference>
<reference key="3">
    <citation type="journal article" date="2014" name="Acta Crystallogr. F">
        <title>Structure of 4-pyridoxolactonase from Mesorhizobium loti.</title>
        <authorList>
            <person name="Kobayashi J."/>
            <person name="Yoshikane Y."/>
            <person name="Yagi T."/>
            <person name="Baba S."/>
            <person name="Mizutani K."/>
            <person name="Takahashi N."/>
            <person name="Mikami B."/>
        </authorList>
    </citation>
    <scope>X-RAY CRYSTALLOGRAPHY (1.58 ANGSTROMS) IN COMPLEX WITH ZINC</scope>
    <scope>CATALYTIC ACTIVITY</scope>
    <scope>FUNCTION</scope>
    <scope>COFACTOR</scope>
</reference>
<comment type="function">
    <text evidence="2 3">Involved in the degradation of pyridoxine or pyridoxamine (free, phosphate-unbound, forms of vitamin B6). Hydrolyzes 4-pyridoxolactone to 4-pyridoxic acid. Has lower activity toward N-hexanoyl-D,L-homoserine lactone, but is not active toward 5-pyridoxolactone and gamma-butyrolactone.</text>
</comment>
<comment type="catalytic activity">
    <reaction evidence="2 3">
        <text>4-pyridoxolactone + H2O = 4-pyridoxate + H(+)</text>
        <dbReference type="Rhea" id="RHEA:14301"/>
        <dbReference type="ChEBI" id="CHEBI:15377"/>
        <dbReference type="ChEBI" id="CHEBI:15378"/>
        <dbReference type="ChEBI" id="CHEBI:16871"/>
        <dbReference type="ChEBI" id="CHEBI:30959"/>
        <dbReference type="EC" id="3.1.1.27"/>
    </reaction>
</comment>
<comment type="cofactor">
    <cofactor evidence="2 3">
        <name>Zn(2+)</name>
        <dbReference type="ChEBI" id="CHEBI:29105"/>
    </cofactor>
    <text evidence="2 3">Binds 2 Zn(2+) ions per subunit.</text>
</comment>
<comment type="activity regulation">
    <text evidence="2">Inhibited by Hg(2+).</text>
</comment>
<comment type="biophysicochemical properties">
    <kinetics>
        <KM evidence="2">7.98 uM for 4-pyridoxolactone</KM>
        <KM evidence="2">319 uM for 4-pyridoxic acid</KM>
    </kinetics>
    <phDependence>
        <text evidence="2">Optimum pH is 7.5. Retains 36% of maximum activity at pH 5.0 and 10% of maximum activity at pH 9.5.</text>
    </phDependence>
    <temperatureDependence>
        <text evidence="2">Optimum temperature is 60-70 degrees Celsius. Stable for 10 minutes at 50 degrees Celsius or lower, 64% of activity remains following 10 minutes incubation at 55 degrees Celsius and 14% of activity remains following 10 minutes incubation at 60 degrees Celsius.</text>
    </temperatureDependence>
</comment>
<comment type="pathway">
    <text evidence="2">Cofactor degradation; B6 vitamer degradation; 4-pyridoxate from pyridoxal: step 2/2.</text>
</comment>
<comment type="subunit">
    <text evidence="2 3">Homodimer.</text>
</comment>
<comment type="similarity">
    <text evidence="4">Belongs to the metallo-beta-lactamase superfamily.</text>
</comment>
<keyword id="KW-0002">3D-structure</keyword>
<keyword id="KW-0903">Direct protein sequencing</keyword>
<keyword id="KW-0378">Hydrolase</keyword>
<keyword id="KW-0479">Metal-binding</keyword>
<keyword id="KW-0862">Zinc</keyword>
<proteinExistence type="evidence at protein level"/>
<feature type="initiator methionine" description="Removed" evidence="2">
    <location>
        <position position="1"/>
    </location>
</feature>
<feature type="chain" id="PRO_0000403057" description="4-pyridoxolactonase" evidence="2">
    <location>
        <begin position="2"/>
        <end position="268"/>
    </location>
</feature>
<feature type="active site" description="Proton donor/acceptor" evidence="1">
    <location>
        <position position="100"/>
    </location>
</feature>
<feature type="binding site" evidence="3">
    <location>
        <position position="96"/>
    </location>
    <ligand>
        <name>Zn(2+)</name>
        <dbReference type="ChEBI" id="CHEBI:29105"/>
        <label>1</label>
        <note>catalytic</note>
    </ligand>
</feature>
<feature type="binding site" evidence="3">
    <location>
        <position position="98"/>
    </location>
    <ligand>
        <name>Zn(2+)</name>
        <dbReference type="ChEBI" id="CHEBI:29105"/>
        <label>1</label>
        <note>catalytic</note>
    </ligand>
</feature>
<feature type="binding site" evidence="3">
    <location>
        <position position="100"/>
    </location>
    <ligand>
        <name>Zn(2+)</name>
        <dbReference type="ChEBI" id="CHEBI:29105"/>
        <label>2</label>
        <note>catalytic</note>
    </ligand>
</feature>
<feature type="binding site" evidence="3">
    <location>
        <position position="101"/>
    </location>
    <ligand>
        <name>Zn(2+)</name>
        <dbReference type="ChEBI" id="CHEBI:29105"/>
        <label>2</label>
        <note>catalytic</note>
    </ligand>
</feature>
<feature type="binding site" evidence="3">
    <location>
        <position position="185"/>
    </location>
    <ligand>
        <name>Zn(2+)</name>
        <dbReference type="ChEBI" id="CHEBI:29105"/>
        <label>1</label>
        <note>catalytic</note>
    </ligand>
</feature>
<feature type="binding site" evidence="3">
    <location>
        <position position="207"/>
    </location>
    <ligand>
        <name>Zn(2+)</name>
        <dbReference type="ChEBI" id="CHEBI:29105"/>
        <label>1</label>
        <note>catalytic</note>
    </ligand>
</feature>
<feature type="binding site" evidence="3">
    <location>
        <position position="207"/>
    </location>
    <ligand>
        <name>Zn(2+)</name>
        <dbReference type="ChEBI" id="CHEBI:29105"/>
        <label>2</label>
        <note>catalytic</note>
    </ligand>
</feature>
<feature type="binding site" evidence="3">
    <location>
        <position position="252"/>
    </location>
    <ligand>
        <name>Zn(2+)</name>
        <dbReference type="ChEBI" id="CHEBI:29105"/>
        <label>2</label>
        <note>catalytic</note>
    </ligand>
</feature>
<feature type="strand" evidence="7">
    <location>
        <begin position="5"/>
        <end position="17"/>
    </location>
</feature>
<feature type="helix" evidence="7">
    <location>
        <begin position="18"/>
        <end position="21"/>
    </location>
</feature>
<feature type="turn" evidence="7">
    <location>
        <begin position="22"/>
        <end position="25"/>
    </location>
</feature>
<feature type="strand" evidence="7">
    <location>
        <begin position="29"/>
        <end position="42"/>
    </location>
</feature>
<feature type="strand" evidence="7">
    <location>
        <begin position="45"/>
        <end position="49"/>
    </location>
</feature>
<feature type="helix" evidence="7">
    <location>
        <begin position="55"/>
        <end position="61"/>
    </location>
</feature>
<feature type="helix" evidence="7">
    <location>
        <begin position="63"/>
        <end position="65"/>
    </location>
</feature>
<feature type="helix" evidence="7">
    <location>
        <begin position="71"/>
        <end position="73"/>
    </location>
</feature>
<feature type="helix" evidence="7">
    <location>
        <begin position="75"/>
        <end position="81"/>
    </location>
</feature>
<feature type="helix" evidence="7">
    <location>
        <begin position="86"/>
        <end position="88"/>
    </location>
</feature>
<feature type="strand" evidence="7">
    <location>
        <begin position="91"/>
        <end position="93"/>
    </location>
</feature>
<feature type="helix" evidence="7">
    <location>
        <begin position="99"/>
        <end position="101"/>
    </location>
</feature>
<feature type="turn" evidence="7">
    <location>
        <begin position="102"/>
        <end position="104"/>
    </location>
</feature>
<feature type="helix" evidence="7">
    <location>
        <begin position="105"/>
        <end position="107"/>
    </location>
</feature>
<feature type="strand" evidence="7">
    <location>
        <begin position="111"/>
        <end position="116"/>
    </location>
</feature>
<feature type="helix" evidence="7">
    <location>
        <begin position="119"/>
        <end position="124"/>
    </location>
</feature>
<feature type="helix" evidence="7">
    <location>
        <begin position="128"/>
        <end position="130"/>
    </location>
</feature>
<feature type="turn" evidence="7">
    <location>
        <begin position="131"/>
        <end position="134"/>
    </location>
</feature>
<feature type="helix" evidence="7">
    <location>
        <begin position="141"/>
        <end position="147"/>
    </location>
</feature>
<feature type="helix" evidence="7">
    <location>
        <begin position="150"/>
        <end position="152"/>
    </location>
</feature>
<feature type="helix" evidence="8">
    <location>
        <begin position="160"/>
        <end position="162"/>
    </location>
</feature>
<feature type="strand" evidence="7">
    <location>
        <begin position="164"/>
        <end position="167"/>
    </location>
</feature>
<feature type="strand" evidence="7">
    <location>
        <begin position="169"/>
        <end position="174"/>
    </location>
</feature>
<feature type="strand" evidence="7">
    <location>
        <begin position="177"/>
        <end position="181"/>
    </location>
</feature>
<feature type="strand" evidence="7">
    <location>
        <begin position="184"/>
        <end position="186"/>
    </location>
</feature>
<feature type="strand" evidence="7">
    <location>
        <begin position="190"/>
        <end position="194"/>
    </location>
</feature>
<feature type="strand" evidence="7">
    <location>
        <begin position="197"/>
        <end position="199"/>
    </location>
</feature>
<feature type="strand" evidence="7">
    <location>
        <begin position="202"/>
        <end position="206"/>
    </location>
</feature>
<feature type="helix" evidence="7">
    <location>
        <begin position="212"/>
        <end position="217"/>
    </location>
</feature>
<feature type="helix" evidence="7">
    <location>
        <begin position="227"/>
        <end position="244"/>
    </location>
</feature>
<feature type="strand" evidence="7">
    <location>
        <begin position="247"/>
        <end position="252"/>
    </location>
</feature>
<feature type="helix" evidence="7">
    <location>
        <begin position="254"/>
        <end position="257"/>
    </location>
</feature>
<accession>Q988B9</accession>
<evidence type="ECO:0000255" key="1"/>
<evidence type="ECO:0000269" key="2">
    <source>
    </source>
</evidence>
<evidence type="ECO:0000269" key="3">
    <source>
    </source>
</evidence>
<evidence type="ECO:0000305" key="4"/>
<evidence type="ECO:0000312" key="5">
    <source>
        <dbReference type="EMBL" id="BAB53031.1"/>
    </source>
</evidence>
<evidence type="ECO:0000312" key="6">
    <source>
        <dbReference type="EMBL" id="BAE53392.1"/>
    </source>
</evidence>
<evidence type="ECO:0007829" key="7">
    <source>
        <dbReference type="PDB" id="3AJ3"/>
    </source>
</evidence>
<evidence type="ECO:0007829" key="8">
    <source>
        <dbReference type="PDB" id="4KEP"/>
    </source>
</evidence>